<evidence type="ECO:0000250" key="1"/>
<evidence type="ECO:0000305" key="2"/>
<reference key="1">
    <citation type="journal article" date="2005" name="J. Bacteriol.">
        <title>Insights on evolution of virulence and resistance from the complete genome analysis of an early methicillin-resistant Staphylococcus aureus strain and a biofilm-producing methicillin-resistant Staphylococcus epidermidis strain.</title>
        <authorList>
            <person name="Gill S.R."/>
            <person name="Fouts D.E."/>
            <person name="Archer G.L."/>
            <person name="Mongodin E.F."/>
            <person name="DeBoy R.T."/>
            <person name="Ravel J."/>
            <person name="Paulsen I.T."/>
            <person name="Kolonay J.F."/>
            <person name="Brinkac L.M."/>
            <person name="Beanan M.J."/>
            <person name="Dodson R.J."/>
            <person name="Daugherty S.C."/>
            <person name="Madupu R."/>
            <person name="Angiuoli S.V."/>
            <person name="Durkin A.S."/>
            <person name="Haft D.H."/>
            <person name="Vamathevan J.J."/>
            <person name="Khouri H."/>
            <person name="Utterback T.R."/>
            <person name="Lee C."/>
            <person name="Dimitrov G."/>
            <person name="Jiang L."/>
            <person name="Qin H."/>
            <person name="Weidman J."/>
            <person name="Tran K."/>
            <person name="Kang K.H."/>
            <person name="Hance I.R."/>
            <person name="Nelson K.E."/>
            <person name="Fraser C.M."/>
        </authorList>
    </citation>
    <scope>NUCLEOTIDE SEQUENCE [LARGE SCALE GENOMIC DNA]</scope>
    <source>
        <strain>ATCC 35984 / DSM 28319 / BCRC 17069 / CCUG 31568 / BM 3577 / RP62A</strain>
    </source>
</reference>
<feature type="chain" id="PRO_0000171001" description="Molybdopterin molybdenumtransferase">
    <location>
        <begin position="1"/>
        <end position="419"/>
    </location>
</feature>
<gene>
    <name type="primary">moeA</name>
    <name type="ordered locus">SERP1855</name>
</gene>
<accession>Q5HLX6</accession>
<sequence>MSVEKRTPISVKEAIKRIMKQHVEVKNININLDESLGHILAEDIVATYDIPRFNKSPYDGFAIRSEDSQGASGENRIEFEVIDHIGAGSVSEKTIDKNQAIRIMTGAQIPSGADAVVMFEQTIESETTFTIRKSFKHLENISLQGEEIKAGDIVLHKGMRINSGVIAVLATYGYTKVRVARKPTVAVIATGSELLEVEDELEPGKIRNSNGPMIKALAKQFGIQVGMYKVQHDNLEKSIEVVKKALSEHDLVITTGGVSVGDFDYLPEIYKSIQAQILFNKVAQRPGSVTTVAFADGKYLFGLSGNPSACYTGFELYVKPAVNKLMGAKACYPQIIKATLMEDFNKANPFTRLIRAKATLTKAGMTVIPSGFNKSGAVVAIAHANAMIMLPGGTRGFKAGNIVDVILTESNSFEEELIL</sequence>
<protein>
    <recommendedName>
        <fullName>Molybdopterin molybdenumtransferase</fullName>
        <shortName>MPT Mo-transferase</shortName>
        <ecNumber>2.10.1.1</ecNumber>
    </recommendedName>
</protein>
<dbReference type="EC" id="2.10.1.1"/>
<dbReference type="EMBL" id="CP000029">
    <property type="protein sequence ID" value="AAW55215.1"/>
    <property type="molecule type" value="Genomic_DNA"/>
</dbReference>
<dbReference type="SMR" id="Q5HLX6"/>
<dbReference type="STRING" id="176279.SERP1855"/>
<dbReference type="KEGG" id="ser:SERP1855"/>
<dbReference type="eggNOG" id="COG0303">
    <property type="taxonomic scope" value="Bacteria"/>
</dbReference>
<dbReference type="HOGENOM" id="CLU_010186_7_1_9"/>
<dbReference type="UniPathway" id="UPA00344"/>
<dbReference type="Proteomes" id="UP000000531">
    <property type="component" value="Chromosome"/>
</dbReference>
<dbReference type="GO" id="GO:0005829">
    <property type="term" value="C:cytosol"/>
    <property type="evidence" value="ECO:0007669"/>
    <property type="project" value="TreeGrafter"/>
</dbReference>
<dbReference type="GO" id="GO:0046872">
    <property type="term" value="F:metal ion binding"/>
    <property type="evidence" value="ECO:0007669"/>
    <property type="project" value="UniProtKB-KW"/>
</dbReference>
<dbReference type="GO" id="GO:0061599">
    <property type="term" value="F:molybdopterin molybdotransferase activity"/>
    <property type="evidence" value="ECO:0007669"/>
    <property type="project" value="UniProtKB-EC"/>
</dbReference>
<dbReference type="GO" id="GO:0006777">
    <property type="term" value="P:Mo-molybdopterin cofactor biosynthetic process"/>
    <property type="evidence" value="ECO:0007669"/>
    <property type="project" value="UniProtKB-KW"/>
</dbReference>
<dbReference type="CDD" id="cd00887">
    <property type="entry name" value="MoeA"/>
    <property type="match status" value="1"/>
</dbReference>
<dbReference type="FunFam" id="2.170.190.11:FF:000001">
    <property type="entry name" value="Molybdopterin molybdenumtransferase"/>
    <property type="match status" value="1"/>
</dbReference>
<dbReference type="FunFam" id="2.40.340.10:FF:000002">
    <property type="entry name" value="Molybdopterin molybdenumtransferase"/>
    <property type="match status" value="1"/>
</dbReference>
<dbReference type="FunFam" id="3.40.980.10:FF:000004">
    <property type="entry name" value="Molybdopterin molybdenumtransferase"/>
    <property type="match status" value="1"/>
</dbReference>
<dbReference type="Gene3D" id="3.40.980.10">
    <property type="entry name" value="MoaB/Mog-like domain"/>
    <property type="match status" value="1"/>
</dbReference>
<dbReference type="Gene3D" id="2.40.340.10">
    <property type="entry name" value="MoeA, C-terminal, domain IV"/>
    <property type="match status" value="1"/>
</dbReference>
<dbReference type="Gene3D" id="3.90.105.10">
    <property type="entry name" value="Molybdopterin biosynthesis moea protein, domain 2"/>
    <property type="match status" value="1"/>
</dbReference>
<dbReference type="Gene3D" id="2.170.190.11">
    <property type="entry name" value="Molybdopterin biosynthesis moea protein, domain 3"/>
    <property type="match status" value="1"/>
</dbReference>
<dbReference type="InterPro" id="IPR036425">
    <property type="entry name" value="MoaB/Mog-like_dom_sf"/>
</dbReference>
<dbReference type="InterPro" id="IPR001453">
    <property type="entry name" value="MoaB/Mog_dom"/>
</dbReference>
<dbReference type="InterPro" id="IPR038987">
    <property type="entry name" value="MoeA-like"/>
</dbReference>
<dbReference type="InterPro" id="IPR005111">
    <property type="entry name" value="MoeA_C_domain_IV"/>
</dbReference>
<dbReference type="InterPro" id="IPR036688">
    <property type="entry name" value="MoeA_C_domain_IV_sf"/>
</dbReference>
<dbReference type="InterPro" id="IPR005110">
    <property type="entry name" value="MoeA_linker/N"/>
</dbReference>
<dbReference type="InterPro" id="IPR036135">
    <property type="entry name" value="MoeA_linker/N_sf"/>
</dbReference>
<dbReference type="NCBIfam" id="NF045515">
    <property type="entry name" value="Glp_gephyrin"/>
    <property type="match status" value="1"/>
</dbReference>
<dbReference type="NCBIfam" id="TIGR00177">
    <property type="entry name" value="molyb_syn"/>
    <property type="match status" value="1"/>
</dbReference>
<dbReference type="PANTHER" id="PTHR10192:SF5">
    <property type="entry name" value="GEPHYRIN"/>
    <property type="match status" value="1"/>
</dbReference>
<dbReference type="PANTHER" id="PTHR10192">
    <property type="entry name" value="MOLYBDOPTERIN BIOSYNTHESIS PROTEIN"/>
    <property type="match status" value="1"/>
</dbReference>
<dbReference type="Pfam" id="PF00994">
    <property type="entry name" value="MoCF_biosynth"/>
    <property type="match status" value="1"/>
</dbReference>
<dbReference type="Pfam" id="PF03454">
    <property type="entry name" value="MoeA_C"/>
    <property type="match status" value="1"/>
</dbReference>
<dbReference type="Pfam" id="PF03453">
    <property type="entry name" value="MoeA_N"/>
    <property type="match status" value="1"/>
</dbReference>
<dbReference type="SMART" id="SM00852">
    <property type="entry name" value="MoCF_biosynth"/>
    <property type="match status" value="1"/>
</dbReference>
<dbReference type="SUPFAM" id="SSF63867">
    <property type="entry name" value="MoeA C-terminal domain-like"/>
    <property type="match status" value="1"/>
</dbReference>
<dbReference type="SUPFAM" id="SSF63882">
    <property type="entry name" value="MoeA N-terminal region -like"/>
    <property type="match status" value="1"/>
</dbReference>
<dbReference type="SUPFAM" id="SSF53218">
    <property type="entry name" value="Molybdenum cofactor biosynthesis proteins"/>
    <property type="match status" value="1"/>
</dbReference>
<keyword id="KW-0460">Magnesium</keyword>
<keyword id="KW-0479">Metal-binding</keyword>
<keyword id="KW-0500">Molybdenum</keyword>
<keyword id="KW-0501">Molybdenum cofactor biosynthesis</keyword>
<keyword id="KW-1185">Reference proteome</keyword>
<keyword id="KW-0808">Transferase</keyword>
<proteinExistence type="inferred from homology"/>
<name>MOEA_STAEQ</name>
<organism>
    <name type="scientific">Staphylococcus epidermidis (strain ATCC 35984 / DSM 28319 / BCRC 17069 / CCUG 31568 / BM 3577 / RP62A)</name>
    <dbReference type="NCBI Taxonomy" id="176279"/>
    <lineage>
        <taxon>Bacteria</taxon>
        <taxon>Bacillati</taxon>
        <taxon>Bacillota</taxon>
        <taxon>Bacilli</taxon>
        <taxon>Bacillales</taxon>
        <taxon>Staphylococcaceae</taxon>
        <taxon>Staphylococcus</taxon>
    </lineage>
</organism>
<comment type="function">
    <text evidence="1">Catalyzes the insertion of molybdate into adenylated molybdopterin with the concomitant release of AMP.</text>
</comment>
<comment type="catalytic activity">
    <reaction>
        <text>adenylyl-molybdopterin + molybdate = Mo-molybdopterin + AMP + H(+)</text>
        <dbReference type="Rhea" id="RHEA:35047"/>
        <dbReference type="ChEBI" id="CHEBI:15378"/>
        <dbReference type="ChEBI" id="CHEBI:36264"/>
        <dbReference type="ChEBI" id="CHEBI:62727"/>
        <dbReference type="ChEBI" id="CHEBI:71302"/>
        <dbReference type="ChEBI" id="CHEBI:456215"/>
        <dbReference type="EC" id="2.10.1.1"/>
    </reaction>
</comment>
<comment type="cofactor">
    <cofactor evidence="1">
        <name>Mg(2+)</name>
        <dbReference type="ChEBI" id="CHEBI:18420"/>
    </cofactor>
    <text evidence="1">Binds 1 Mg(2+) ion per subunit.</text>
</comment>
<comment type="pathway">
    <text>Cofactor biosynthesis; molybdopterin biosynthesis.</text>
</comment>
<comment type="similarity">
    <text evidence="2">Belongs to the MoeA family.</text>
</comment>